<keyword id="KW-0007">Acetylation</keyword>
<keyword id="KW-0010">Activator</keyword>
<keyword id="KW-0053">Apoptosis</keyword>
<keyword id="KW-0090">Biological rhythms</keyword>
<keyword id="KW-0131">Cell cycle</keyword>
<keyword id="KW-0963">Cytoplasm</keyword>
<keyword id="KW-0206">Cytoskeleton</keyword>
<keyword id="KW-0238">DNA-binding</keyword>
<keyword id="KW-0256">Endoplasmic reticulum</keyword>
<keyword id="KW-1017">Isopeptide bond</keyword>
<keyword id="KW-0479">Metal-binding</keyword>
<keyword id="KW-0496">Mitochondrion</keyword>
<keyword id="KW-1210">Necrosis</keyword>
<keyword id="KW-0539">Nucleus</keyword>
<keyword id="KW-0597">Phosphoprotein</keyword>
<keyword id="KW-1185">Reference proteome</keyword>
<keyword id="KW-0678">Repressor</keyword>
<keyword id="KW-0804">Transcription</keyword>
<keyword id="KW-0805">Transcription regulation</keyword>
<keyword id="KW-0043">Tumor suppressor</keyword>
<keyword id="KW-0832">Ubl conjugation</keyword>
<keyword id="KW-0862">Zinc</keyword>
<proteinExistence type="evidence at transcript level"/>
<evidence type="ECO:0000250" key="1"/>
<evidence type="ECO:0000250" key="2">
    <source>
        <dbReference type="UniProtKB" id="P02340"/>
    </source>
</evidence>
<evidence type="ECO:0000250" key="3">
    <source>
        <dbReference type="UniProtKB" id="P04637"/>
    </source>
</evidence>
<evidence type="ECO:0000250" key="4">
    <source>
        <dbReference type="UniProtKB" id="P10361"/>
    </source>
</evidence>
<evidence type="ECO:0000250" key="5">
    <source>
        <dbReference type="UniProtKB" id="Q9TUB2"/>
    </source>
</evidence>
<evidence type="ECO:0000256" key="6">
    <source>
        <dbReference type="SAM" id="MobiDB-lite"/>
    </source>
</evidence>
<evidence type="ECO:0000305" key="7"/>
<sequence length="280" mass="30985">PAVNNLLLSPDVVNWLDEGPDEAPRMPAAPAPLAPAPATSWPLSSFVPSQKTYPGCYGFRLGFLNSGTAKSVTCTYSPTLNKLFCQLAKTCPVQLLVSSPPPPGTRVRAMAIYKKSEFMTEVVRRCPHHERCSDSSDGLAPPQHLIRVEGNLRAEYLDDRNTFRHSVVVPYEPPEVGSDCTTIHYNFMCNSSCMGGMNRRPILTIITLEDSSGNLLGRNSFEVRVCACPGRDRRTEEENFRKKEEPCPEPPPRSTKRVLSSNTSSSPPQKKKPLDGEYFT</sequence>
<reference key="1">
    <citation type="journal article" date="1996" name="Cancer Lett.">
        <title>Analysis of the equine tumor suppressor gene p53 in the normal horse and in eight cutaneous squamous cell carcinomas.</title>
        <authorList>
            <person name="Pazzi K.A."/>
            <person name="Kraegel S.A."/>
            <person name="Griffey S.M."/>
            <person name="Theon A.P."/>
            <person name="Madewell B.R."/>
        </authorList>
    </citation>
    <scope>NUCLEOTIDE SEQUENCE [MRNA] OF 1-263</scope>
    <source>
        <tissue>Spleen</tissue>
    </source>
</reference>
<reference key="2">
    <citation type="journal article" date="1996" name="DNA Seq.">
        <title>Nucleotide sequence of exons 5 to 9 of the p53 tumour-suppressor gene of the horse (Equus caballus).</title>
        <authorList>
            <person name="Nasir L."/>
            <person name="Reid S.W."/>
        </authorList>
    </citation>
    <scope>NUCLEOTIDE SEQUENCE [GENOMIC DNA] OF 76-280</scope>
</reference>
<dbReference type="EMBL" id="S83123">
    <property type="protein sequence ID" value="AAB46899.1"/>
    <property type="molecule type" value="mRNA"/>
</dbReference>
<dbReference type="EMBL" id="U37120">
    <property type="protein sequence ID" value="AAB18936.1"/>
    <property type="molecule type" value="Genomic_DNA"/>
</dbReference>
<dbReference type="SMR" id="P79892"/>
<dbReference type="STRING" id="9796.ENSECAP00000032751"/>
<dbReference type="PaxDb" id="9796-ENSECAP00000032751"/>
<dbReference type="InParanoid" id="P79892"/>
<dbReference type="Proteomes" id="UP000002281">
    <property type="component" value="Unplaced"/>
</dbReference>
<dbReference type="GO" id="GO:0005813">
    <property type="term" value="C:centrosome"/>
    <property type="evidence" value="ECO:0000250"/>
    <property type="project" value="UniProtKB"/>
</dbReference>
<dbReference type="GO" id="GO:0005737">
    <property type="term" value="C:cytoplasm"/>
    <property type="evidence" value="ECO:0000250"/>
    <property type="project" value="UniProtKB"/>
</dbReference>
<dbReference type="GO" id="GO:0005783">
    <property type="term" value="C:endoplasmic reticulum"/>
    <property type="evidence" value="ECO:0007669"/>
    <property type="project" value="UniProtKB-SubCell"/>
</dbReference>
<dbReference type="GO" id="GO:0005759">
    <property type="term" value="C:mitochondrial matrix"/>
    <property type="evidence" value="ECO:0007669"/>
    <property type="project" value="UniProtKB-SubCell"/>
</dbReference>
<dbReference type="GO" id="GO:0005739">
    <property type="term" value="C:mitochondrion"/>
    <property type="evidence" value="ECO:0000250"/>
    <property type="project" value="UniProtKB"/>
</dbReference>
<dbReference type="GO" id="GO:0005634">
    <property type="term" value="C:nucleus"/>
    <property type="evidence" value="ECO:0000250"/>
    <property type="project" value="UniProtKB"/>
</dbReference>
<dbReference type="GO" id="GO:0016605">
    <property type="term" value="C:PML body"/>
    <property type="evidence" value="ECO:0007669"/>
    <property type="project" value="UniProtKB-SubCell"/>
</dbReference>
<dbReference type="GO" id="GO:0000981">
    <property type="term" value="F:DNA-binding transcription factor activity, RNA polymerase II-specific"/>
    <property type="evidence" value="ECO:0000250"/>
    <property type="project" value="UniProtKB"/>
</dbReference>
<dbReference type="GO" id="GO:0046872">
    <property type="term" value="F:metal ion binding"/>
    <property type="evidence" value="ECO:0007669"/>
    <property type="project" value="UniProtKB-KW"/>
</dbReference>
<dbReference type="GO" id="GO:0140693">
    <property type="term" value="F:molecular condensate scaffold activity"/>
    <property type="evidence" value="ECO:0000250"/>
    <property type="project" value="UniProtKB"/>
</dbReference>
<dbReference type="GO" id="GO:1990841">
    <property type="term" value="F:promoter-specific chromatin binding"/>
    <property type="evidence" value="ECO:0000250"/>
    <property type="project" value="UniProtKB"/>
</dbReference>
<dbReference type="GO" id="GO:0000978">
    <property type="term" value="F:RNA polymerase II cis-regulatory region sequence-specific DNA binding"/>
    <property type="evidence" value="ECO:0000250"/>
    <property type="project" value="UniProtKB"/>
</dbReference>
<dbReference type="GO" id="GO:0006915">
    <property type="term" value="P:apoptotic process"/>
    <property type="evidence" value="ECO:0007669"/>
    <property type="project" value="UniProtKB-KW"/>
</dbReference>
<dbReference type="GO" id="GO:0048512">
    <property type="term" value="P:circadian behavior"/>
    <property type="evidence" value="ECO:0000250"/>
    <property type="project" value="UniProtKB"/>
</dbReference>
<dbReference type="GO" id="GO:0006974">
    <property type="term" value="P:DNA damage response"/>
    <property type="evidence" value="ECO:0000250"/>
    <property type="project" value="UniProtKB"/>
</dbReference>
<dbReference type="GO" id="GO:0043153">
    <property type="term" value="P:entrainment of circadian clock by photoperiod"/>
    <property type="evidence" value="ECO:0000250"/>
    <property type="project" value="UniProtKB"/>
</dbReference>
<dbReference type="GO" id="GO:0045892">
    <property type="term" value="P:negative regulation of DNA-templated transcription"/>
    <property type="evidence" value="ECO:0000250"/>
    <property type="project" value="UniProtKB"/>
</dbReference>
<dbReference type="GO" id="GO:2001244">
    <property type="term" value="P:positive regulation of intrinsic apoptotic signaling pathway"/>
    <property type="evidence" value="ECO:0000250"/>
    <property type="project" value="UniProtKB"/>
</dbReference>
<dbReference type="GO" id="GO:0045944">
    <property type="term" value="P:positive regulation of transcription by RNA polymerase II"/>
    <property type="evidence" value="ECO:0000250"/>
    <property type="project" value="UniProtKB"/>
</dbReference>
<dbReference type="GO" id="GO:0006357">
    <property type="term" value="P:regulation of transcription by RNA polymerase II"/>
    <property type="evidence" value="ECO:0000318"/>
    <property type="project" value="GO_Central"/>
</dbReference>
<dbReference type="CDD" id="cd08367">
    <property type="entry name" value="P53"/>
    <property type="match status" value="1"/>
</dbReference>
<dbReference type="FunFam" id="2.60.40.720:FF:000003">
    <property type="entry name" value="Cellular tumor antigen p53"/>
    <property type="match status" value="1"/>
</dbReference>
<dbReference type="Gene3D" id="2.60.40.720">
    <property type="match status" value="1"/>
</dbReference>
<dbReference type="InterPro" id="IPR008967">
    <property type="entry name" value="p53-like_TF_DNA-bd_sf"/>
</dbReference>
<dbReference type="InterPro" id="IPR012346">
    <property type="entry name" value="p53/RUNT-type_TF_DNA-bd_sf"/>
</dbReference>
<dbReference type="InterPro" id="IPR011615">
    <property type="entry name" value="p53_DNA-bd"/>
</dbReference>
<dbReference type="InterPro" id="IPR002117">
    <property type="entry name" value="p53_tumour_suppressor"/>
</dbReference>
<dbReference type="PANTHER" id="PTHR11447">
    <property type="entry name" value="CELLULAR TUMOR ANTIGEN P53"/>
    <property type="match status" value="1"/>
</dbReference>
<dbReference type="PANTHER" id="PTHR11447:SF6">
    <property type="entry name" value="CELLULAR TUMOR ANTIGEN P53"/>
    <property type="match status" value="1"/>
</dbReference>
<dbReference type="Pfam" id="PF00870">
    <property type="entry name" value="P53"/>
    <property type="match status" value="1"/>
</dbReference>
<dbReference type="PRINTS" id="PR00386">
    <property type="entry name" value="P53SUPPRESSR"/>
</dbReference>
<dbReference type="SUPFAM" id="SSF49417">
    <property type="entry name" value="p53-like transcription factors"/>
    <property type="match status" value="1"/>
</dbReference>
<dbReference type="PROSITE" id="PS00348">
    <property type="entry name" value="P53"/>
    <property type="match status" value="1"/>
</dbReference>
<feature type="chain" id="PRO_0000185702" description="Cellular tumor antigen p53">
    <location>
        <begin position="1" status="less than"/>
        <end position="280" status="greater than"/>
    </location>
</feature>
<feature type="DNA-binding region" evidence="3">
    <location>
        <begin position="52"/>
        <end position="243"/>
    </location>
</feature>
<feature type="region of interest" description="Interaction with WWOX" evidence="1">
    <location>
        <begin position="26"/>
        <end position="60"/>
    </location>
</feature>
<feature type="region of interest" description="Required for interaction with ZNF385A" evidence="1">
    <location>
        <begin position="50"/>
        <end position="251"/>
    </location>
</feature>
<feature type="region of interest" description="Required for interaction with FBXO42" evidence="1">
    <location>
        <begin position="63"/>
        <end position="187"/>
    </location>
</feature>
<feature type="region of interest" description="Interaction with E4F1" evidence="1">
    <location>
        <begin position="207"/>
        <end position="245"/>
    </location>
</feature>
<feature type="region of interest" description="Interaction with DNA" evidence="1">
    <location>
        <begin position="224"/>
        <end position="231"/>
    </location>
</feature>
<feature type="region of interest" description="Disordered" evidence="6">
    <location>
        <begin position="234"/>
        <end position="280"/>
    </location>
</feature>
<feature type="region of interest" description="Oligomerization">
    <location>
        <begin position="276"/>
        <end position="280" status="greater than"/>
    </location>
</feature>
<feature type="short sequence motif" description="Bipartite nuclear localization signal" evidence="1">
    <location>
        <begin position="256"/>
        <end position="272"/>
    </location>
</feature>
<feature type="compositionally biased region" description="Basic and acidic residues" evidence="6">
    <location>
        <begin position="234"/>
        <end position="246"/>
    </location>
</feature>
<feature type="compositionally biased region" description="Polar residues" evidence="6">
    <location>
        <begin position="257"/>
        <end position="268"/>
    </location>
</feature>
<feature type="binding site" evidence="3">
    <location>
        <position position="126"/>
    </location>
    <ligand>
        <name>Zn(2+)</name>
        <dbReference type="ChEBI" id="CHEBI:29105"/>
    </ligand>
</feature>
<feature type="binding site" evidence="3">
    <location>
        <position position="129"/>
    </location>
    <ligand>
        <name>Zn(2+)</name>
        <dbReference type="ChEBI" id="CHEBI:29105"/>
    </ligand>
</feature>
<feature type="binding site" evidence="3">
    <location>
        <position position="189"/>
    </location>
    <ligand>
        <name>Zn(2+)</name>
        <dbReference type="ChEBI" id="CHEBI:29105"/>
    </ligand>
</feature>
<feature type="binding site" evidence="3">
    <location>
        <position position="193"/>
    </location>
    <ligand>
        <name>Zn(2+)</name>
        <dbReference type="ChEBI" id="CHEBI:29105"/>
    </ligand>
</feature>
<feature type="site" description="Interaction with DNA" evidence="3">
    <location>
        <position position="70"/>
    </location>
</feature>
<feature type="modified residue" description="Phosphoserine; by CDK5, DYRK2, HIPK2 and PKC/PRKCG" evidence="3">
    <location>
        <position position="9"/>
    </location>
</feature>
<feature type="modified residue" description="N6-acetyllysine" evidence="3">
    <location>
        <position position="70"/>
    </location>
</feature>
<feature type="modified residue" description="N6-lactoyllysine" evidence="3">
    <location>
        <position position="70"/>
    </location>
</feature>
<feature type="modified residue" description="N6-lactoyllysine" evidence="3">
    <location>
        <position position="89"/>
    </location>
</feature>
<feature type="modified residue" description="Phosphoserine; by AURKB" evidence="3">
    <location>
        <position position="133"/>
    </location>
</feature>
<feature type="modified residue" description="Phosphoserine; by AURKB" evidence="3">
    <location>
        <position position="220"/>
    </location>
</feature>
<feature type="modified residue" description="Phosphothreonine; by AURKB" evidence="3">
    <location>
        <position position="235"/>
    </location>
</feature>
<feature type="modified residue" description="N6-acetyllysine" evidence="3">
    <location>
        <position position="256"/>
    </location>
</feature>
<feature type="modified residue" description="Phosphoserine; by AURKA, CDK1 and CDK2" evidence="3">
    <location>
        <position position="266"/>
    </location>
</feature>
<feature type="modified residue" description="N6-acetyllysine" evidence="2">
    <location>
        <position position="272"/>
    </location>
</feature>
<feature type="cross-link" description="Glycyl lysine isopeptide (Lys-Gly) (interchain with G-Cter in ubiquitin)" evidence="3">
    <location>
        <position position="242"/>
    </location>
</feature>
<feature type="cross-link" description="Glycyl lysine isopeptide (Lys-Gly) (interchain with G-Cter in ubiquitin)" evidence="3">
    <location>
        <position position="243"/>
    </location>
</feature>
<feature type="sequence conflict" description="In Ref. 2; AAB18936." evidence="7" ref="2">
    <original>T</original>
    <variation>A</variation>
    <location>
        <position position="79"/>
    </location>
</feature>
<feature type="sequence conflict" description="In Ref. 2; AAB18936." evidence="7" ref="2">
    <original>L</original>
    <variation>M</variation>
    <location>
        <position position="83"/>
    </location>
</feature>
<feature type="sequence conflict" description="In Ref. 2; AAB18936." evidence="7" ref="2">
    <original>A</original>
    <variation>V</variation>
    <location>
        <position position="111"/>
    </location>
</feature>
<feature type="sequence conflict" description="In Ref. 2; AAB18936." evidence="7" ref="2">
    <original>G</original>
    <variation>A</variation>
    <location>
        <position position="138"/>
    </location>
</feature>
<feature type="non-terminal residue">
    <location>
        <position position="1"/>
    </location>
</feature>
<feature type="non-terminal residue">
    <location>
        <position position="280"/>
    </location>
</feature>
<protein>
    <recommendedName>
        <fullName>Cellular tumor antigen p53</fullName>
    </recommendedName>
    <alternativeName>
        <fullName>Tumor suppressor p53</fullName>
    </alternativeName>
</protein>
<gene>
    <name type="primary">TP53</name>
    <name type="synonym">P53</name>
</gene>
<comment type="function">
    <text evidence="2 3">Multifunctional transcription factor that induces cell cycle arrest, DNA repair or apoptosis upon binding to its target DNA sequence. Acts as a tumor suppressor in many tumor types; induces growth arrest or apoptosis depending on the physiological circumstances and cell type. Negatively regulates cell division by controlling expression of a set of genes required for this process. One of the activated genes is an inhibitor of cyclin-dependent kinases. Apoptosis induction seems to be mediated either by stimulation of BAX and FAS antigen expression, or by repression of Bcl-2 expression. Its pro-apoptotic activity is activated via its interaction with PPP1R13B/ASPP1 or TP53BP2/ASPP2 (By similarity). However, this activity is inhibited when the interaction with PPP1R13B/ASPP1 or TP53BP2/ASPP2 is displaced by PPP1R13L/iASPP (By similarity). In cooperation with mitochondrial PPIF is involved in activating oxidative stress-induced necrosis; the function is largely independent of transcription. Prevents CDK7 kinase activity when associated to CAK complex in response to DNA damage, thus stopping cell cycle progression. Induces the transcription of long intergenic non-coding RNA p21 (lincRNA-p21) and lincRNA-Mkln1. LincRNA-p21 participates in TP53-dependent transcriptional repression leading to apoptosis and seems to have an effect on cell-cycle regulation. Regulates the circadian clock by repressing CLOCK-BMAL1-mediated transcriptional activation of PER2.</text>
</comment>
<comment type="cofactor">
    <cofactor evidence="1">
        <name>Zn(2+)</name>
        <dbReference type="ChEBI" id="CHEBI:29105"/>
    </cofactor>
    <text evidence="1">Binds 1 zinc ion per subunit.</text>
</comment>
<comment type="subunit">
    <text evidence="2 3 4 5">Forms homodimers and homotetramers (By similarity). Binds DNA as a homotetramer. Interacts with AXIN1. Probably part of a complex consisting of TP53, HIPK2 and AXIN1. Interacts with histone acetyltransferases EP300 and methyltransferases HRMT1L2 and CARM1, and recruits them to promoters. Interacts (via C-terminus) with TAF1; when TAF1 is part of the TFIID complex. Interacts with ING4; this interaction may be indirect. Found in a complex with CABLES1 and TP73. Interacts with HIPK1, HIPK2, and TP53INP1. Interacts with WWOX. Interacts with USP7 and SYVN1. Interacts with HSP90AB1. Interacts with CHD8; leading to recruit histone H1 and prevent transactivation activity. Interacts with ARMC10, BANP, CDKN2AIP, NUAK1, STK11/LKB1, UHRF2 and E4F. Interacts with YWHAZ; the interaction enhances TP53 transcriptional activity. Phosphorylation of YWHAZ on 'Ser-58' inhibits this interaction. Interacts (via DNA-binding domain) with MAML1 (via N-terminus). Interacts with MKRN1. Interacts with PML (via C-terminus). Interacts with MDM2; leading to ubiquitination and proteasomal degradation of TP53. Directly interacts with FBXO42; leading to ubiquitination and degradation of TP53. Interacts (phosphorylated at Ser-15 by ATM) with the phosphatase PP2A-PPP2R5C holoenzyme; regulates stress-induced TP53-dependent inhibition of cell proliferation. Interacts with PPP2R2A. Interacts with AURKA, DAXX, BRD7 and TRIM24. Interacts (when monomethylated at Lys-375) with L3MBTL1. Interacts with GRK5. Binds to the CAK complex (CDK7, cyclin H and MAT1) in response to DNA damage. Interacts with CDK5 in neurons. Interacts with AURKB, SETD2, UHRF2 and NOC2L. Interacts (via N-terminus) with PTK2/FAK1; this promotes ubiquitination by MDM2. Interacts with PTK2B/PYK2; this promotes ubiquitination by MDM2. Interacts with PRKCG. Interacts with PPIF; the association implicates preferentially tetrameric TP53, is induced by oxidative stress and is impaired by cyclosporin A (CsA). Interacts with SNAI1; the interaction induces SNAI1 degradation via MDM2-mediated ubiquitination and inhibits SNAI1-induced cell invasion. Interacts with UBC9. Interacts with ZNF385B; the interaction is direct. Interacts (via DNA-binding domain) with ZNF385A; the interaction is direct and enhances p53/TP53 transactivation functions on cell-cycle arrest target genes, resulting in growth arrest (By similarity). Interacts with ANKRD2. Interacts with RFFL and RNF34; involved in p53/TP53 ubiquitination. Interacts with MTA1 and COP1. Interacts with CCAR2 (via N-terminus). Interacts with MORC3. Interacts (via C-terminus) with POU4F2 (via C-terminus). Interacts (via oligomerization region) with NOP53; the interaction is direct and may prevent the MDM2-mediated proteasomal degradation of TP53. Interacts with AFG1L; mediates mitochondrial translocation of TP53. Interacts with UBD (By similarity). Interacts with TAF6 (By similarity). Interacts with C10orf90/FATS; the interaction inhibits binding of TP53 and MDM2 (By similarity). Interacts with NUPR1; interaction is stress-dependent. Forms a complex with EP300 and NUPR1; this complex binds CDKN1A promoter leading to transcriptional induction of CDKN1A (By similarity). Interacts with PRMT5 in response to DNA damage; the interaction is TTC5/STRAP dependent (By similarity). Interacts with PPP1R13L (via SH3 domain and ANK repeats); the interaction inhibits pro-apoptotic activity of p53/TP53 (By similarity). Interacts with PPP1R13B/ASPP1 and TP53BP2/ASPP2; the interactions promotes pro-apoptotic activity (By similarity). When phosphorylated at Ser-15, interacts with DDX3X and gamma-tubulin (By similarity). Interacts with KAT7/HBO1; leading to inhibit histone acetyltransferase activity of KAT7/HBO1 (By similarity). Interacts (via N-terminus) with E3 ubiquitin-protein ligase MUL1; the interaction results in ubiquitination of cytoplasmic TP53 at Lys-24 and subsequent proteasomal degradation (By similarity). Interacts with S100A4; this interaction promotes TP53 degradation (By similarity). Interacts with TTC5/STRAP; the interaction may result in increased mitochondrial-dependent apoptosis (By similarity). Interacts with NQO1; this interaction is NADH-dependent, stabilizes TP53 in response to oxidative stress and protects it from ubiquitin-independent degradation by the 20S proteasome (By similarity). Interacts with DAZAP2 at TP53 target gene promoters; the interaction is triggered by DNA damage and leads to modulation of the expression of a subset of TP53 target genes, reducing DNA damage-induced cell death by limiting the expression of cell death-mediating TP53 target genes (By similarity). Interacts (via N-terminus) with ZNF768 (via zinc-finger domains); interaction might be facilitated by TP53 oligomerization state (By similarity). Forms a ternary complex with ALDOB and G6PD; this interaction is direct. ALDOB stabilizes the complex inhibiting G6PD activity and keeping oxidative pentose phosphate metabolism in check (By similarity). Interacts with MORN3; the interactions mediate post-transcriptional modifications of TP53 by MDM2 and SIRT1 (By similarity). Interacts with HSPA9/MOT-2; the interaction promotes the degradation of TP53 (By similarity). Interacts with FBXO22; this interaction promotes TP53 proteasomal degradation (By similarity).</text>
</comment>
<comment type="subcellular location">
    <subcellularLocation>
        <location evidence="3">Cytoplasm</location>
    </subcellularLocation>
    <subcellularLocation>
        <location evidence="3">Nucleus</location>
    </subcellularLocation>
    <subcellularLocation>
        <location evidence="3">Nucleus</location>
        <location evidence="3">PML body</location>
    </subcellularLocation>
    <subcellularLocation>
        <location evidence="3">Endoplasmic reticulum</location>
    </subcellularLocation>
    <subcellularLocation>
        <location evidence="3">Mitochondrion matrix</location>
    </subcellularLocation>
    <subcellularLocation>
        <location evidence="3">Cytoplasm</location>
        <location evidence="3">Cytoskeleton</location>
        <location evidence="3">Microtubule organizing center</location>
        <location evidence="3">Centrosome</location>
    </subcellularLocation>
    <text evidence="3">Interaction with BANP promotes nuclear localization. Recruited into PML bodies together with CHEK2. Translocates to mitochondria upon oxidative stress. Translocates to mitochondria in response to mitomycin C treatment (By similarity). Competitive inhibition of TP53 interaction with HSPA9/MOT-2 by UBXN2A results in increased protein abundance and subsequent translocation of TP53 to the nucleus (By similarity).</text>
</comment>
<comment type="domain">
    <text evidence="3">The N-terminal and C-terminal disordered regions undergo liquid-liquid phase separation (LLPS) following homotetramerization and activation. Post-translational modifications, such as phosphorylation or lactylation affect the ability to undergo LLPS.</text>
</comment>
<comment type="domain">
    <text evidence="3">The nuclear export signal acts as a transcriptional repression domain. The TADI and TADII motifs (residues 17 to 25 and 48 to 56) correspond both to 9aaTAD motifs which are transactivation domains present in a large number of yeast and animal transcription factors.</text>
</comment>
<comment type="PTM">
    <text evidence="1">Phosphorylated by VRK1, which may prevent the interaction with MDM2. Phosphorylated by CHEK2 in response to DNA damage, which prevents ubiquitination by MDM2. Phosphorylated by PLK3 in response to reactive oxygen species (ROS), promoting p53/TP53-mediated apoptosis. Probably phosphorylated on by CDK7 in a CAK complex in response to DNA damage. Phosphorylated by CK2 following UV but not gamma irradiation. Stabilized by CDK5-mediated phosphorylation in response to genotoxic and oxidative stresses at Ser-9, leading to accumulation of p53/TP53, particularly in the nucleus, thus inducing the transactivation of p53/TP53 target genes. Phosphorylated by DYRK2 at Ser-9 in response to genotoxic stress. Phosphorylated at Ser-266 by CDK2 in response to DNA-damage (By similarity).</text>
</comment>
<comment type="PTM">
    <text evidence="3">Monomethylated by SETD7, leading to stabilization and increased transcriptional activation. Monomethylated by SMYD2, leading to decreased DNA-binding activity and subsequent transcriptional regulation activity. Monomethylation by SETD7 prevents interaction with SMYD2 and subsequent monomethylation by SMYD2 (By similarity). Dimethylated by EHMT1 and EHMT2. Monomethylated by KMT5A, promoting interaction with L3MBTL1 and leading to repress transcriptional activity. Demethylation by KDM1A prevents interaction with TP53BP1 and represses TP53-mediated transcriptional activation (By similarity). Methylated by PRMT5; methylation is increased after DNA damage and might possibly affect TP53 target gene specificity (By similarity).</text>
</comment>
<comment type="PTM">
    <text evidence="1">Sumoylated with SUMO1.</text>
</comment>
<comment type="PTM">
    <text evidence="2 3">Ubiquitinated by MDM2 and SYVN1, which leads to proteasomal degradation. Ubiquitinated by RFWD3, which works in cooperation with MDM2 and may catalyze the formation of short polyubiquitin chains on p53/TP53 that are not targeted to the proteasome. Ubiquitinated by MKRN1, which leads to proteasomal degradation. Deubiquitinated by USP10, leading to stabilize it. Ubiquitinated by TRIM24, RFFL, RNF34 and RNF125, which leads to proteasomal degradation. Ubiquitination by TOPORS induces degradation. Deubiquitination by USP7, leading to stabilize it. Ubiquitinated by COP1, which leads to proteasomal degradation (By similarity). Ubiquitination and subsequent proteasomal degradation is negatively regulated by CCAR2 (By similarity). Polyubiquitinated by C10orf90/FATS, polyubiquitination is 'Lys-48'-linkage independent and non-proteolytic, leading to TP53 stabilization (By similarity). Deubiquitinated by USP3, leading to stabilization (By similarity). Ubiquitinated by MSL2, promoting its cytoplasmic localization (By similarity). Also ubiquitinated by the SCF(FBXO22)-KDMA4A complex; leading to proteasomal degradation (By similarity).</text>
</comment>
<comment type="PTM">
    <text evidence="3">Lactylation by AARS1 prevents ability to undergo liquid-liquid phase separation (LLPS), thereby inhibiting transcription factor activity.</text>
</comment>
<comment type="disease">
    <text>p53 is found in increased amounts in a wide variety of transformed cells. p53 is frequently mutated or inactivated in many types of cancer.</text>
</comment>
<comment type="similarity">
    <text evidence="7">Belongs to the p53 family.</text>
</comment>
<accession>P79892</accession>
<accession>Q29481</accession>
<name>P53_HORSE</name>
<organism>
    <name type="scientific">Equus caballus</name>
    <name type="common">Horse</name>
    <dbReference type="NCBI Taxonomy" id="9796"/>
    <lineage>
        <taxon>Eukaryota</taxon>
        <taxon>Metazoa</taxon>
        <taxon>Chordata</taxon>
        <taxon>Craniata</taxon>
        <taxon>Vertebrata</taxon>
        <taxon>Euteleostomi</taxon>
        <taxon>Mammalia</taxon>
        <taxon>Eutheria</taxon>
        <taxon>Laurasiatheria</taxon>
        <taxon>Perissodactyla</taxon>
        <taxon>Equidae</taxon>
        <taxon>Equus</taxon>
    </lineage>
</organism>